<protein>
    <recommendedName>
        <fullName evidence="1">Ketol-acid reductoisomerase (NADP(+))</fullName>
        <shortName evidence="1">KARI</shortName>
        <ecNumber evidence="1">1.1.1.86</ecNumber>
    </recommendedName>
    <alternativeName>
        <fullName evidence="1">Acetohydroxy-acid isomeroreductase</fullName>
        <shortName evidence="1">AHIR</shortName>
    </alternativeName>
    <alternativeName>
        <fullName evidence="1">Alpha-keto-beta-hydroxylacyl reductoisomerase</fullName>
    </alternativeName>
    <alternativeName>
        <fullName evidence="1">Ketol-acid reductoisomerase type 1</fullName>
    </alternativeName>
    <alternativeName>
        <fullName evidence="1">Ketol-acid reductoisomerase type I</fullName>
    </alternativeName>
</protein>
<evidence type="ECO:0000255" key="1">
    <source>
        <dbReference type="HAMAP-Rule" id="MF_00435"/>
    </source>
</evidence>
<evidence type="ECO:0000255" key="2">
    <source>
        <dbReference type="PROSITE-ProRule" id="PRU01197"/>
    </source>
</evidence>
<evidence type="ECO:0000255" key="3">
    <source>
        <dbReference type="PROSITE-ProRule" id="PRU01198"/>
    </source>
</evidence>
<accession>B1VZ72</accession>
<dbReference type="EC" id="1.1.1.86" evidence="1"/>
<dbReference type="EMBL" id="AP009493">
    <property type="protein sequence ID" value="BAG18827.1"/>
    <property type="molecule type" value="Genomic_DNA"/>
</dbReference>
<dbReference type="RefSeq" id="WP_003966071.1">
    <property type="nucleotide sequence ID" value="NC_010572.1"/>
</dbReference>
<dbReference type="SMR" id="B1VZ72"/>
<dbReference type="GeneID" id="91311987"/>
<dbReference type="KEGG" id="sgr:SGR_1998"/>
<dbReference type="eggNOG" id="COG0059">
    <property type="taxonomic scope" value="Bacteria"/>
</dbReference>
<dbReference type="HOGENOM" id="CLU_033821_0_1_11"/>
<dbReference type="UniPathway" id="UPA00047">
    <property type="reaction ID" value="UER00056"/>
</dbReference>
<dbReference type="UniPathway" id="UPA00049">
    <property type="reaction ID" value="UER00060"/>
</dbReference>
<dbReference type="Proteomes" id="UP000001685">
    <property type="component" value="Chromosome"/>
</dbReference>
<dbReference type="GO" id="GO:0005829">
    <property type="term" value="C:cytosol"/>
    <property type="evidence" value="ECO:0007669"/>
    <property type="project" value="TreeGrafter"/>
</dbReference>
<dbReference type="GO" id="GO:0004455">
    <property type="term" value="F:ketol-acid reductoisomerase activity"/>
    <property type="evidence" value="ECO:0007669"/>
    <property type="project" value="UniProtKB-UniRule"/>
</dbReference>
<dbReference type="GO" id="GO:0000287">
    <property type="term" value="F:magnesium ion binding"/>
    <property type="evidence" value="ECO:0007669"/>
    <property type="project" value="UniProtKB-UniRule"/>
</dbReference>
<dbReference type="GO" id="GO:0050661">
    <property type="term" value="F:NADP binding"/>
    <property type="evidence" value="ECO:0007669"/>
    <property type="project" value="InterPro"/>
</dbReference>
<dbReference type="GO" id="GO:0009097">
    <property type="term" value="P:isoleucine biosynthetic process"/>
    <property type="evidence" value="ECO:0007669"/>
    <property type="project" value="UniProtKB-UniRule"/>
</dbReference>
<dbReference type="GO" id="GO:0009099">
    <property type="term" value="P:L-valine biosynthetic process"/>
    <property type="evidence" value="ECO:0007669"/>
    <property type="project" value="UniProtKB-UniRule"/>
</dbReference>
<dbReference type="FunFam" id="3.40.50.720:FF:000023">
    <property type="entry name" value="Ketol-acid reductoisomerase (NADP(+))"/>
    <property type="match status" value="1"/>
</dbReference>
<dbReference type="Gene3D" id="6.10.240.10">
    <property type="match status" value="1"/>
</dbReference>
<dbReference type="Gene3D" id="3.40.50.720">
    <property type="entry name" value="NAD(P)-binding Rossmann-like Domain"/>
    <property type="match status" value="1"/>
</dbReference>
<dbReference type="HAMAP" id="MF_00435">
    <property type="entry name" value="IlvC"/>
    <property type="match status" value="1"/>
</dbReference>
<dbReference type="InterPro" id="IPR008927">
    <property type="entry name" value="6-PGluconate_DH-like_C_sf"/>
</dbReference>
<dbReference type="InterPro" id="IPR013023">
    <property type="entry name" value="KARI"/>
</dbReference>
<dbReference type="InterPro" id="IPR000506">
    <property type="entry name" value="KARI_C"/>
</dbReference>
<dbReference type="InterPro" id="IPR013116">
    <property type="entry name" value="KARI_N"/>
</dbReference>
<dbReference type="InterPro" id="IPR014359">
    <property type="entry name" value="KARI_prok"/>
</dbReference>
<dbReference type="InterPro" id="IPR036291">
    <property type="entry name" value="NAD(P)-bd_dom_sf"/>
</dbReference>
<dbReference type="NCBIfam" id="TIGR00465">
    <property type="entry name" value="ilvC"/>
    <property type="match status" value="1"/>
</dbReference>
<dbReference type="NCBIfam" id="NF004017">
    <property type="entry name" value="PRK05479.1"/>
    <property type="match status" value="1"/>
</dbReference>
<dbReference type="NCBIfam" id="NF009940">
    <property type="entry name" value="PRK13403.1"/>
    <property type="match status" value="1"/>
</dbReference>
<dbReference type="PANTHER" id="PTHR21371">
    <property type="entry name" value="KETOL-ACID REDUCTOISOMERASE, MITOCHONDRIAL"/>
    <property type="match status" value="1"/>
</dbReference>
<dbReference type="PANTHER" id="PTHR21371:SF1">
    <property type="entry name" value="KETOL-ACID REDUCTOISOMERASE, MITOCHONDRIAL"/>
    <property type="match status" value="1"/>
</dbReference>
<dbReference type="Pfam" id="PF01450">
    <property type="entry name" value="KARI_C"/>
    <property type="match status" value="1"/>
</dbReference>
<dbReference type="Pfam" id="PF07991">
    <property type="entry name" value="KARI_N"/>
    <property type="match status" value="1"/>
</dbReference>
<dbReference type="PIRSF" id="PIRSF000116">
    <property type="entry name" value="IlvC_gammaproteo"/>
    <property type="match status" value="1"/>
</dbReference>
<dbReference type="SUPFAM" id="SSF48179">
    <property type="entry name" value="6-phosphogluconate dehydrogenase C-terminal domain-like"/>
    <property type="match status" value="1"/>
</dbReference>
<dbReference type="SUPFAM" id="SSF51735">
    <property type="entry name" value="NAD(P)-binding Rossmann-fold domains"/>
    <property type="match status" value="1"/>
</dbReference>
<dbReference type="PROSITE" id="PS51851">
    <property type="entry name" value="KARI_C"/>
    <property type="match status" value="1"/>
</dbReference>
<dbReference type="PROSITE" id="PS51850">
    <property type="entry name" value="KARI_N"/>
    <property type="match status" value="1"/>
</dbReference>
<gene>
    <name evidence="1" type="primary">ilvC</name>
    <name type="ordered locus">SGR_1998</name>
</gene>
<proteinExistence type="inferred from homology"/>
<name>ILVC_STRGG</name>
<keyword id="KW-0028">Amino-acid biosynthesis</keyword>
<keyword id="KW-0100">Branched-chain amino acid biosynthesis</keyword>
<keyword id="KW-0460">Magnesium</keyword>
<keyword id="KW-0479">Metal-binding</keyword>
<keyword id="KW-0521">NADP</keyword>
<keyword id="KW-0560">Oxidoreductase</keyword>
<feature type="chain" id="PRO_1000191004" description="Ketol-acid reductoisomerase (NADP(+))">
    <location>
        <begin position="1"/>
        <end position="333"/>
    </location>
</feature>
<feature type="domain" description="KARI N-terminal Rossmann" evidence="2">
    <location>
        <begin position="2"/>
        <end position="182"/>
    </location>
</feature>
<feature type="domain" description="KARI C-terminal knotted" evidence="3">
    <location>
        <begin position="183"/>
        <end position="328"/>
    </location>
</feature>
<feature type="active site" evidence="1">
    <location>
        <position position="108"/>
    </location>
</feature>
<feature type="binding site" evidence="1">
    <location>
        <begin position="25"/>
        <end position="28"/>
    </location>
    <ligand>
        <name>NADP(+)</name>
        <dbReference type="ChEBI" id="CHEBI:58349"/>
    </ligand>
</feature>
<feature type="binding site" evidence="1">
    <location>
        <position position="51"/>
    </location>
    <ligand>
        <name>NADP(+)</name>
        <dbReference type="ChEBI" id="CHEBI:58349"/>
    </ligand>
</feature>
<feature type="binding site" evidence="1">
    <location>
        <position position="53"/>
    </location>
    <ligand>
        <name>NADP(+)</name>
        <dbReference type="ChEBI" id="CHEBI:58349"/>
    </ligand>
</feature>
<feature type="binding site" evidence="1">
    <location>
        <begin position="83"/>
        <end position="86"/>
    </location>
    <ligand>
        <name>NADP(+)</name>
        <dbReference type="ChEBI" id="CHEBI:58349"/>
    </ligand>
</feature>
<feature type="binding site" evidence="1">
    <location>
        <position position="134"/>
    </location>
    <ligand>
        <name>NADP(+)</name>
        <dbReference type="ChEBI" id="CHEBI:58349"/>
    </ligand>
</feature>
<feature type="binding site" evidence="1">
    <location>
        <position position="191"/>
    </location>
    <ligand>
        <name>Mg(2+)</name>
        <dbReference type="ChEBI" id="CHEBI:18420"/>
        <label>1</label>
    </ligand>
</feature>
<feature type="binding site" evidence="1">
    <location>
        <position position="191"/>
    </location>
    <ligand>
        <name>Mg(2+)</name>
        <dbReference type="ChEBI" id="CHEBI:18420"/>
        <label>2</label>
    </ligand>
</feature>
<feature type="binding site" evidence="1">
    <location>
        <position position="195"/>
    </location>
    <ligand>
        <name>Mg(2+)</name>
        <dbReference type="ChEBI" id="CHEBI:18420"/>
        <label>1</label>
    </ligand>
</feature>
<feature type="binding site" evidence="1">
    <location>
        <position position="227"/>
    </location>
    <ligand>
        <name>Mg(2+)</name>
        <dbReference type="ChEBI" id="CHEBI:18420"/>
        <label>2</label>
    </ligand>
</feature>
<feature type="binding site" evidence="1">
    <location>
        <position position="231"/>
    </location>
    <ligand>
        <name>Mg(2+)</name>
        <dbReference type="ChEBI" id="CHEBI:18420"/>
        <label>2</label>
    </ligand>
</feature>
<feature type="binding site" evidence="1">
    <location>
        <position position="252"/>
    </location>
    <ligand>
        <name>substrate</name>
    </ligand>
</feature>
<reference key="1">
    <citation type="journal article" date="2008" name="J. Bacteriol.">
        <title>Genome sequence of the streptomycin-producing microorganism Streptomyces griseus IFO 13350.</title>
        <authorList>
            <person name="Ohnishi Y."/>
            <person name="Ishikawa J."/>
            <person name="Hara H."/>
            <person name="Suzuki H."/>
            <person name="Ikenoya M."/>
            <person name="Ikeda H."/>
            <person name="Yamashita A."/>
            <person name="Hattori M."/>
            <person name="Horinouchi S."/>
        </authorList>
    </citation>
    <scope>NUCLEOTIDE SEQUENCE [LARGE SCALE GENOMIC DNA]</scope>
    <source>
        <strain>JCM 4626 / CBS 651.72 / NBRC 13350 / KCC S-0626 / ISP 5235</strain>
    </source>
</reference>
<organism>
    <name type="scientific">Streptomyces griseus subsp. griseus (strain JCM 4626 / CBS 651.72 / NBRC 13350 / KCC S-0626 / ISP 5235)</name>
    <dbReference type="NCBI Taxonomy" id="455632"/>
    <lineage>
        <taxon>Bacteria</taxon>
        <taxon>Bacillati</taxon>
        <taxon>Actinomycetota</taxon>
        <taxon>Actinomycetes</taxon>
        <taxon>Kitasatosporales</taxon>
        <taxon>Streptomycetaceae</taxon>
        <taxon>Streptomyces</taxon>
    </lineage>
</organism>
<comment type="function">
    <text evidence="1">Involved in the biosynthesis of branched-chain amino acids (BCAA). Catalyzes an alkyl-migration followed by a ketol-acid reduction of (S)-2-acetolactate (S2AL) to yield (R)-2,3-dihydroxy-isovalerate. In the isomerase reaction, S2AL is rearranged via a Mg-dependent methyl migration to produce 3-hydroxy-3-methyl-2-ketobutyrate (HMKB). In the reductase reaction, this 2-ketoacid undergoes a metal-dependent reduction by NADPH to yield (R)-2,3-dihydroxy-isovalerate.</text>
</comment>
<comment type="catalytic activity">
    <reaction evidence="1">
        <text>(2R)-2,3-dihydroxy-3-methylbutanoate + NADP(+) = (2S)-2-acetolactate + NADPH + H(+)</text>
        <dbReference type="Rhea" id="RHEA:22068"/>
        <dbReference type="ChEBI" id="CHEBI:15378"/>
        <dbReference type="ChEBI" id="CHEBI:49072"/>
        <dbReference type="ChEBI" id="CHEBI:57783"/>
        <dbReference type="ChEBI" id="CHEBI:58349"/>
        <dbReference type="ChEBI" id="CHEBI:58476"/>
        <dbReference type="EC" id="1.1.1.86"/>
    </reaction>
</comment>
<comment type="catalytic activity">
    <reaction evidence="1">
        <text>(2R,3R)-2,3-dihydroxy-3-methylpentanoate + NADP(+) = (S)-2-ethyl-2-hydroxy-3-oxobutanoate + NADPH + H(+)</text>
        <dbReference type="Rhea" id="RHEA:13493"/>
        <dbReference type="ChEBI" id="CHEBI:15378"/>
        <dbReference type="ChEBI" id="CHEBI:49256"/>
        <dbReference type="ChEBI" id="CHEBI:49258"/>
        <dbReference type="ChEBI" id="CHEBI:57783"/>
        <dbReference type="ChEBI" id="CHEBI:58349"/>
        <dbReference type="EC" id="1.1.1.86"/>
    </reaction>
</comment>
<comment type="cofactor">
    <cofactor evidence="1">
        <name>Mg(2+)</name>
        <dbReference type="ChEBI" id="CHEBI:18420"/>
    </cofactor>
    <text evidence="1">Binds 2 magnesium ions per subunit.</text>
</comment>
<comment type="pathway">
    <text evidence="1">Amino-acid biosynthesis; L-isoleucine biosynthesis; L-isoleucine from 2-oxobutanoate: step 2/4.</text>
</comment>
<comment type="pathway">
    <text evidence="1">Amino-acid biosynthesis; L-valine biosynthesis; L-valine from pyruvate: step 2/4.</text>
</comment>
<comment type="similarity">
    <text evidence="1">Belongs to the ketol-acid reductoisomerase family.</text>
</comment>
<sequence>MAELFYDDDADLSIIQGRKVAVLGYGSQGHAHALSLRDSGVDVRVGLHEGSKSKAKAEEQGLRVVTPSEAAAEADVIMILVPDPIQAQVYEESVKDNLKDGDALFFGHGLNIRFGFIKPPAGVDVCMVAPKGPGHLVRRQYEEGRGVPCIVAVEQDASGKGLELALSYAKGIGGTRAGVIKTTFTEETETDLFGEQAVLCGGTAALVKAGFETLTEAGYQPEIAYFECLHELKLIVDLMYEGGLEKMRWSISETAEWGDYVTGPRIITDATKAEMKKVLAEIQDGTFAKNWMAEYHNGLPKYNEYKKADSDHLLETTGRELRKLMSWVNDEEA</sequence>